<keyword id="KW-1003">Cell membrane</keyword>
<keyword id="KW-0406">Ion transport</keyword>
<keyword id="KW-0472">Membrane</keyword>
<keyword id="KW-0533">Nickel</keyword>
<keyword id="KW-0921">Nickel transport</keyword>
<keyword id="KW-0812">Transmembrane</keyword>
<keyword id="KW-1133">Transmembrane helix</keyword>
<keyword id="KW-0813">Transport</keyword>
<accession>Q6G9H9</accession>
<organism>
    <name type="scientific">Staphylococcus aureus (strain MSSA476)</name>
    <dbReference type="NCBI Taxonomy" id="282459"/>
    <lineage>
        <taxon>Bacteria</taxon>
        <taxon>Bacillati</taxon>
        <taxon>Bacillota</taxon>
        <taxon>Bacilli</taxon>
        <taxon>Bacillales</taxon>
        <taxon>Staphylococcaceae</taxon>
        <taxon>Staphylococcus</taxon>
    </lineage>
</organism>
<protein>
    <recommendedName>
        <fullName evidence="1">Nickel import system permease protein NikC</fullName>
    </recommendedName>
</protein>
<proteinExistence type="inferred from homology"/>
<feature type="chain" id="PRO_0000276786" description="Nickel import system permease protein NikC">
    <location>
        <begin position="1"/>
        <end position="276"/>
    </location>
</feature>
<feature type="transmembrane region" description="Helical" evidence="2">
    <location>
        <begin position="10"/>
        <end position="30"/>
    </location>
</feature>
<feature type="transmembrane region" description="Helical" evidence="2">
    <location>
        <begin position="73"/>
        <end position="93"/>
    </location>
</feature>
<feature type="transmembrane region" description="Helical" evidence="2">
    <location>
        <begin position="108"/>
        <end position="128"/>
    </location>
</feature>
<feature type="transmembrane region" description="Helical" evidence="2">
    <location>
        <begin position="186"/>
        <end position="206"/>
    </location>
</feature>
<feature type="transmembrane region" description="Helical" evidence="2">
    <location>
        <begin position="238"/>
        <end position="258"/>
    </location>
</feature>
<feature type="domain" description="ABC transmembrane type-1" evidence="2">
    <location>
        <begin position="69"/>
        <end position="258"/>
    </location>
</feature>
<sequence length="276" mass="31255">MHKIFSKNNLIFFVFVAFIFVVIVLQFFVSSENATKVNLSQTFEPISWLHLLGTDDYGRDLFTRIIIGARSTLFVTVLTLIAIVVIGVTLGLFAGYKKGWIERLVLRFIDVGLSIPEFIIMIALASFFQPSLWNLVISITLIKWMNYTRLTRSIVNSEMNKPYIKMAQLFHVPTRTILIRHLTPKIIPAIIVLMVVDFGKIILYISSLSFIGLGAQPPTPEWGAMLQQGRDFISSHPIMLIAPASVIAITILIFNLTGDALRDRLLKQRGEYDESH</sequence>
<name>NIKC_STAAS</name>
<evidence type="ECO:0000250" key="1">
    <source>
        <dbReference type="UniProtKB" id="Q2FYQ6"/>
    </source>
</evidence>
<evidence type="ECO:0000255" key="2">
    <source>
        <dbReference type="PROSITE-ProRule" id="PRU00441"/>
    </source>
</evidence>
<evidence type="ECO:0000305" key="3"/>
<reference key="1">
    <citation type="journal article" date="2004" name="Proc. Natl. Acad. Sci. U.S.A.">
        <title>Complete genomes of two clinical Staphylococcus aureus strains: evidence for the rapid evolution of virulence and drug resistance.</title>
        <authorList>
            <person name="Holden M.T.G."/>
            <person name="Feil E.J."/>
            <person name="Lindsay J.A."/>
            <person name="Peacock S.J."/>
            <person name="Day N.P.J."/>
            <person name="Enright M.C."/>
            <person name="Foster T.J."/>
            <person name="Moore C.E."/>
            <person name="Hurst L."/>
            <person name="Atkin R."/>
            <person name="Barron A."/>
            <person name="Bason N."/>
            <person name="Bentley S.D."/>
            <person name="Chillingworth C."/>
            <person name="Chillingworth T."/>
            <person name="Churcher C."/>
            <person name="Clark L."/>
            <person name="Corton C."/>
            <person name="Cronin A."/>
            <person name="Doggett J."/>
            <person name="Dowd L."/>
            <person name="Feltwell T."/>
            <person name="Hance Z."/>
            <person name="Harris B."/>
            <person name="Hauser H."/>
            <person name="Holroyd S."/>
            <person name="Jagels K."/>
            <person name="James K.D."/>
            <person name="Lennard N."/>
            <person name="Line A."/>
            <person name="Mayes R."/>
            <person name="Moule S."/>
            <person name="Mungall K."/>
            <person name="Ormond D."/>
            <person name="Quail M.A."/>
            <person name="Rabbinowitsch E."/>
            <person name="Rutherford K.M."/>
            <person name="Sanders M."/>
            <person name="Sharp S."/>
            <person name="Simmonds M."/>
            <person name="Stevens K."/>
            <person name="Whitehead S."/>
            <person name="Barrell B.G."/>
            <person name="Spratt B.G."/>
            <person name="Parkhill J."/>
        </authorList>
    </citation>
    <scope>NUCLEOTIDE SEQUENCE [LARGE SCALE GENOMIC DNA]</scope>
    <source>
        <strain>MSSA476</strain>
    </source>
</reference>
<dbReference type="EMBL" id="BX571857">
    <property type="protein sequence ID" value="CAG43098.1"/>
    <property type="molecule type" value="Genomic_DNA"/>
</dbReference>
<dbReference type="RefSeq" id="WP_000548932.1">
    <property type="nucleotide sequence ID" value="NC_002953.3"/>
</dbReference>
<dbReference type="SMR" id="Q6G9H9"/>
<dbReference type="KEGG" id="sas:SAS1322"/>
<dbReference type="HOGENOM" id="CLU_028518_5_3_9"/>
<dbReference type="GO" id="GO:0005886">
    <property type="term" value="C:plasma membrane"/>
    <property type="evidence" value="ECO:0007669"/>
    <property type="project" value="UniProtKB-SubCell"/>
</dbReference>
<dbReference type="GO" id="GO:0015675">
    <property type="term" value="P:nickel cation transport"/>
    <property type="evidence" value="ECO:0007669"/>
    <property type="project" value="UniProtKB-KW"/>
</dbReference>
<dbReference type="GO" id="GO:0055085">
    <property type="term" value="P:transmembrane transport"/>
    <property type="evidence" value="ECO:0007669"/>
    <property type="project" value="InterPro"/>
</dbReference>
<dbReference type="CDD" id="cd06261">
    <property type="entry name" value="TM_PBP2"/>
    <property type="match status" value="1"/>
</dbReference>
<dbReference type="Gene3D" id="1.10.3720.10">
    <property type="entry name" value="MetI-like"/>
    <property type="match status" value="1"/>
</dbReference>
<dbReference type="InterPro" id="IPR053385">
    <property type="entry name" value="ABC_transport_permease"/>
</dbReference>
<dbReference type="InterPro" id="IPR050366">
    <property type="entry name" value="BP-dependent_transpt_permease"/>
</dbReference>
<dbReference type="InterPro" id="IPR000515">
    <property type="entry name" value="MetI-like"/>
</dbReference>
<dbReference type="InterPro" id="IPR035906">
    <property type="entry name" value="MetI-like_sf"/>
</dbReference>
<dbReference type="NCBIfam" id="NF045474">
    <property type="entry name" value="Opp2C"/>
    <property type="match status" value="1"/>
</dbReference>
<dbReference type="PANTHER" id="PTHR43386:SF1">
    <property type="entry name" value="D,D-DIPEPTIDE TRANSPORT SYSTEM PERMEASE PROTEIN DDPC-RELATED"/>
    <property type="match status" value="1"/>
</dbReference>
<dbReference type="PANTHER" id="PTHR43386">
    <property type="entry name" value="OLIGOPEPTIDE TRANSPORT SYSTEM PERMEASE PROTEIN APPC"/>
    <property type="match status" value="1"/>
</dbReference>
<dbReference type="Pfam" id="PF00528">
    <property type="entry name" value="BPD_transp_1"/>
    <property type="match status" value="1"/>
</dbReference>
<dbReference type="SUPFAM" id="SSF161098">
    <property type="entry name" value="MetI-like"/>
    <property type="match status" value="1"/>
</dbReference>
<dbReference type="PROSITE" id="PS50928">
    <property type="entry name" value="ABC_TM1"/>
    <property type="match status" value="1"/>
</dbReference>
<gene>
    <name evidence="1" type="primary">nikC</name>
    <name type="synonym">oppC2</name>
    <name type="ordered locus">SAS1322</name>
</gene>
<comment type="function">
    <text evidence="1">Part of the ABC transporter complex NikABCDE (Opp2) involved in nickel import. Probably responsible for the translocation of the substrate across the membrane.</text>
</comment>
<comment type="subunit">
    <text evidence="1">The complex is composed of two ATP-binding proteins (NikD and NikE), two transmembrane proteins (NikB and NikC) and a solute-binding protein (NikA).</text>
</comment>
<comment type="subcellular location">
    <subcellularLocation>
        <location evidence="3">Cell membrane</location>
        <topology evidence="2">Multi-pass membrane protein</topology>
    </subcellularLocation>
</comment>
<comment type="similarity">
    <text evidence="3">Belongs to the binding-protein-dependent transport system permease family. OppBC subfamily.</text>
</comment>